<organism>
    <name type="scientific">Homo sapiens</name>
    <name type="common">Human</name>
    <dbReference type="NCBI Taxonomy" id="9606"/>
    <lineage>
        <taxon>Eukaryota</taxon>
        <taxon>Metazoa</taxon>
        <taxon>Chordata</taxon>
        <taxon>Craniata</taxon>
        <taxon>Vertebrata</taxon>
        <taxon>Euteleostomi</taxon>
        <taxon>Mammalia</taxon>
        <taxon>Eutheria</taxon>
        <taxon>Euarchontoglires</taxon>
        <taxon>Primates</taxon>
        <taxon>Haplorrhini</taxon>
        <taxon>Catarrhini</taxon>
        <taxon>Hominidae</taxon>
        <taxon>Homo</taxon>
    </lineage>
</organism>
<accession>Q96MG2</accession>
<dbReference type="EMBL" id="AK056978">
    <property type="protein sequence ID" value="BAB71330.1"/>
    <property type="molecule type" value="mRNA"/>
</dbReference>
<dbReference type="EMBL" id="BC021201">
    <property type="protein sequence ID" value="AAH21201.1"/>
    <property type="molecule type" value="mRNA"/>
</dbReference>
<dbReference type="CCDS" id="CCDS12086.1"/>
<dbReference type="RefSeq" id="NP_653217.1">
    <property type="nucleotide sequence ID" value="NM_144616.4"/>
</dbReference>
<dbReference type="BioGRID" id="125977">
    <property type="interactions" value="20"/>
</dbReference>
<dbReference type="FunCoup" id="Q96MG2">
    <property type="interactions" value="42"/>
</dbReference>
<dbReference type="IntAct" id="Q96MG2">
    <property type="interactions" value="16"/>
</dbReference>
<dbReference type="STRING" id="9606.ENSP00000300961"/>
<dbReference type="iPTMnet" id="Q96MG2"/>
<dbReference type="PhosphoSitePlus" id="Q96MG2"/>
<dbReference type="BioMuta" id="JSRP1"/>
<dbReference type="DMDM" id="74732368"/>
<dbReference type="jPOST" id="Q96MG2"/>
<dbReference type="MassIVE" id="Q96MG2"/>
<dbReference type="PaxDb" id="9606-ENSP00000300961"/>
<dbReference type="PeptideAtlas" id="Q96MG2"/>
<dbReference type="ProteomicsDB" id="77352"/>
<dbReference type="Antibodypedia" id="42291">
    <property type="antibodies" value="42 antibodies from 15 providers"/>
</dbReference>
<dbReference type="DNASU" id="126306"/>
<dbReference type="Ensembl" id="ENST00000300961.10">
    <property type="protein sequence ID" value="ENSP00000300961.4"/>
    <property type="gene ID" value="ENSG00000167476.10"/>
</dbReference>
<dbReference type="GeneID" id="126306"/>
<dbReference type="KEGG" id="hsa:126306"/>
<dbReference type="MANE-Select" id="ENST00000300961.10">
    <property type="protein sequence ID" value="ENSP00000300961.4"/>
    <property type="RefSeq nucleotide sequence ID" value="NM_144616.4"/>
    <property type="RefSeq protein sequence ID" value="NP_653217.1"/>
</dbReference>
<dbReference type="UCSC" id="uc002lvj.3">
    <property type="organism name" value="human"/>
</dbReference>
<dbReference type="AGR" id="HGNC:24963"/>
<dbReference type="CTD" id="126306"/>
<dbReference type="DisGeNET" id="126306"/>
<dbReference type="GeneCards" id="JSRP1"/>
<dbReference type="HGNC" id="HGNC:24963">
    <property type="gene designation" value="JSRP1"/>
</dbReference>
<dbReference type="HPA" id="ENSG00000167476">
    <property type="expression patterns" value="Tissue enriched (skeletal)"/>
</dbReference>
<dbReference type="MIM" id="608743">
    <property type="type" value="gene"/>
</dbReference>
<dbReference type="neXtProt" id="NX_Q96MG2"/>
<dbReference type="OpenTargets" id="ENSG00000167476"/>
<dbReference type="PharmGKB" id="PA143485511"/>
<dbReference type="VEuPathDB" id="HostDB:ENSG00000167476"/>
<dbReference type="eggNOG" id="ENOG502S4JK">
    <property type="taxonomic scope" value="Eukaryota"/>
</dbReference>
<dbReference type="GeneTree" id="ENSGT00390000012911"/>
<dbReference type="HOGENOM" id="CLU_073497_0_0_1"/>
<dbReference type="InParanoid" id="Q96MG2"/>
<dbReference type="OMA" id="QELPWGD"/>
<dbReference type="OrthoDB" id="9838378at2759"/>
<dbReference type="PAN-GO" id="Q96MG2">
    <property type="GO annotations" value="3 GO annotations based on evolutionary models"/>
</dbReference>
<dbReference type="PhylomeDB" id="Q96MG2"/>
<dbReference type="PathwayCommons" id="Q96MG2"/>
<dbReference type="SignaLink" id="Q96MG2"/>
<dbReference type="BioGRID-ORCS" id="126306">
    <property type="hits" value="15 hits in 1137 CRISPR screens"/>
</dbReference>
<dbReference type="GenomeRNAi" id="126306"/>
<dbReference type="Pharos" id="Q96MG2">
    <property type="development level" value="Tdark"/>
</dbReference>
<dbReference type="PRO" id="PR:Q96MG2"/>
<dbReference type="Proteomes" id="UP000005640">
    <property type="component" value="Chromosome 19"/>
</dbReference>
<dbReference type="RNAct" id="Q96MG2">
    <property type="molecule type" value="protein"/>
</dbReference>
<dbReference type="Bgee" id="ENSG00000167476">
    <property type="expression patterns" value="Expressed in hindlimb stylopod muscle and 139 other cell types or tissues"/>
</dbReference>
<dbReference type="GO" id="GO:0016529">
    <property type="term" value="C:sarcoplasmic reticulum"/>
    <property type="evidence" value="ECO:0000318"/>
    <property type="project" value="GO_Central"/>
</dbReference>
<dbReference type="GO" id="GO:0033017">
    <property type="term" value="C:sarcoplasmic reticulum membrane"/>
    <property type="evidence" value="ECO:0007669"/>
    <property type="project" value="UniProtKB-SubCell"/>
</dbReference>
<dbReference type="GO" id="GO:0003009">
    <property type="term" value="P:skeletal muscle contraction"/>
    <property type="evidence" value="ECO:0000314"/>
    <property type="project" value="UniProtKB"/>
</dbReference>
<dbReference type="InterPro" id="IPR026178">
    <property type="entry name" value="JSRP1"/>
</dbReference>
<dbReference type="PANTHER" id="PTHR22397">
    <property type="entry name" value="JUNCTIONAL SARCOPLASMIC RETICULUM PROTEIN 1"/>
    <property type="match status" value="1"/>
</dbReference>
<dbReference type="PANTHER" id="PTHR22397:SF2">
    <property type="entry name" value="JUNCTIONAL SARCOPLASMIC RETICULUM PROTEIN 1"/>
    <property type="match status" value="1"/>
</dbReference>
<dbReference type="Pfam" id="PF15312">
    <property type="entry name" value="JSRP"/>
    <property type="match status" value="1"/>
</dbReference>
<protein>
    <recommendedName>
        <fullName>Junctional sarcoplasmic reticulum protein 1</fullName>
    </recommendedName>
    <alternativeName>
        <fullName>Junctional-face membrane protein of 45 kDa homolog</fullName>
        <shortName>JP-45</shortName>
    </alternativeName>
</protein>
<gene>
    <name type="primary">JSRP1</name>
    <name type="synonym">JP45</name>
</gene>
<name>JSPR1_HUMAN</name>
<keyword id="KW-0256">Endoplasmic reticulum</keyword>
<keyword id="KW-0472">Membrane</keyword>
<keyword id="KW-1267">Proteomics identification</keyword>
<keyword id="KW-1185">Reference proteome</keyword>
<keyword id="KW-0703">Sarcoplasmic reticulum</keyword>
<reference key="1">
    <citation type="journal article" date="2004" name="Nat. Genet.">
        <title>Complete sequencing and characterization of 21,243 full-length human cDNAs.</title>
        <authorList>
            <person name="Ota T."/>
            <person name="Suzuki Y."/>
            <person name="Nishikawa T."/>
            <person name="Otsuki T."/>
            <person name="Sugiyama T."/>
            <person name="Irie R."/>
            <person name="Wakamatsu A."/>
            <person name="Hayashi K."/>
            <person name="Sato H."/>
            <person name="Nagai K."/>
            <person name="Kimura K."/>
            <person name="Makita H."/>
            <person name="Sekine M."/>
            <person name="Obayashi M."/>
            <person name="Nishi T."/>
            <person name="Shibahara T."/>
            <person name="Tanaka T."/>
            <person name="Ishii S."/>
            <person name="Yamamoto J."/>
            <person name="Saito K."/>
            <person name="Kawai Y."/>
            <person name="Isono Y."/>
            <person name="Nakamura Y."/>
            <person name="Nagahari K."/>
            <person name="Murakami K."/>
            <person name="Yasuda T."/>
            <person name="Iwayanagi T."/>
            <person name="Wagatsuma M."/>
            <person name="Shiratori A."/>
            <person name="Sudo H."/>
            <person name="Hosoiri T."/>
            <person name="Kaku Y."/>
            <person name="Kodaira H."/>
            <person name="Kondo H."/>
            <person name="Sugawara M."/>
            <person name="Takahashi M."/>
            <person name="Kanda K."/>
            <person name="Yokoi T."/>
            <person name="Furuya T."/>
            <person name="Kikkawa E."/>
            <person name="Omura Y."/>
            <person name="Abe K."/>
            <person name="Kamihara K."/>
            <person name="Katsuta N."/>
            <person name="Sato K."/>
            <person name="Tanikawa M."/>
            <person name="Yamazaki M."/>
            <person name="Ninomiya K."/>
            <person name="Ishibashi T."/>
            <person name="Yamashita H."/>
            <person name="Murakawa K."/>
            <person name="Fujimori K."/>
            <person name="Tanai H."/>
            <person name="Kimata M."/>
            <person name="Watanabe M."/>
            <person name="Hiraoka S."/>
            <person name="Chiba Y."/>
            <person name="Ishida S."/>
            <person name="Ono Y."/>
            <person name="Takiguchi S."/>
            <person name="Watanabe S."/>
            <person name="Yosida M."/>
            <person name="Hotuta T."/>
            <person name="Kusano J."/>
            <person name="Kanehori K."/>
            <person name="Takahashi-Fujii A."/>
            <person name="Hara H."/>
            <person name="Tanase T.-O."/>
            <person name="Nomura Y."/>
            <person name="Togiya S."/>
            <person name="Komai F."/>
            <person name="Hara R."/>
            <person name="Takeuchi K."/>
            <person name="Arita M."/>
            <person name="Imose N."/>
            <person name="Musashino K."/>
            <person name="Yuuki H."/>
            <person name="Oshima A."/>
            <person name="Sasaki N."/>
            <person name="Aotsuka S."/>
            <person name="Yoshikawa Y."/>
            <person name="Matsunawa H."/>
            <person name="Ichihara T."/>
            <person name="Shiohata N."/>
            <person name="Sano S."/>
            <person name="Moriya S."/>
            <person name="Momiyama H."/>
            <person name="Satoh N."/>
            <person name="Takami S."/>
            <person name="Terashima Y."/>
            <person name="Suzuki O."/>
            <person name="Nakagawa S."/>
            <person name="Senoh A."/>
            <person name="Mizoguchi H."/>
            <person name="Goto Y."/>
            <person name="Shimizu F."/>
            <person name="Wakebe H."/>
            <person name="Hishigaki H."/>
            <person name="Watanabe T."/>
            <person name="Sugiyama A."/>
            <person name="Takemoto M."/>
            <person name="Kawakami B."/>
            <person name="Yamazaki M."/>
            <person name="Watanabe K."/>
            <person name="Kumagai A."/>
            <person name="Itakura S."/>
            <person name="Fukuzumi Y."/>
            <person name="Fujimori Y."/>
            <person name="Komiyama M."/>
            <person name="Tashiro H."/>
            <person name="Tanigami A."/>
            <person name="Fujiwara T."/>
            <person name="Ono T."/>
            <person name="Yamada K."/>
            <person name="Fujii Y."/>
            <person name="Ozaki K."/>
            <person name="Hirao M."/>
            <person name="Ohmori Y."/>
            <person name="Kawabata A."/>
            <person name="Hikiji T."/>
            <person name="Kobatake N."/>
            <person name="Inagaki H."/>
            <person name="Ikema Y."/>
            <person name="Okamoto S."/>
            <person name="Okitani R."/>
            <person name="Kawakami T."/>
            <person name="Noguchi S."/>
            <person name="Itoh T."/>
            <person name="Shigeta K."/>
            <person name="Senba T."/>
            <person name="Matsumura K."/>
            <person name="Nakajima Y."/>
            <person name="Mizuno T."/>
            <person name="Morinaga M."/>
            <person name="Sasaki M."/>
            <person name="Togashi T."/>
            <person name="Oyama M."/>
            <person name="Hata H."/>
            <person name="Watanabe M."/>
            <person name="Komatsu T."/>
            <person name="Mizushima-Sugano J."/>
            <person name="Satoh T."/>
            <person name="Shirai Y."/>
            <person name="Takahashi Y."/>
            <person name="Nakagawa K."/>
            <person name="Okumura K."/>
            <person name="Nagase T."/>
            <person name="Nomura N."/>
            <person name="Kikuchi H."/>
            <person name="Masuho Y."/>
            <person name="Yamashita R."/>
            <person name="Nakai K."/>
            <person name="Yada T."/>
            <person name="Nakamura Y."/>
            <person name="Ohara O."/>
            <person name="Isogai T."/>
            <person name="Sugano S."/>
        </authorList>
    </citation>
    <scope>NUCLEOTIDE SEQUENCE [LARGE SCALE MRNA]</scope>
    <source>
        <tissue>Skeletal muscle</tissue>
    </source>
</reference>
<reference key="2">
    <citation type="journal article" date="2004" name="Genome Res.">
        <title>The status, quality, and expansion of the NIH full-length cDNA project: the Mammalian Gene Collection (MGC).</title>
        <authorList>
            <consortium name="The MGC Project Team"/>
        </authorList>
    </citation>
    <scope>NUCLEOTIDE SEQUENCE [LARGE SCALE MRNA]</scope>
    <source>
        <tissue>Muscle</tissue>
    </source>
</reference>
<reference key="3">
    <citation type="journal article" date="2013" name="Hum. Mutat.">
        <title>JP-45/JSRP1 variants affect skeletal muscle excitation-contraction coupling by decreasing the sensitivity of the dihydropyridine receptor.</title>
        <authorList>
            <person name="Yasuda T."/>
            <person name="Delbono O."/>
            <person name="Wang Z.M."/>
            <person name="Messi M.L."/>
            <person name="Girard T."/>
            <person name="Urwyler A."/>
            <person name="Treves S."/>
            <person name="Zorzato F."/>
        </authorList>
    </citation>
    <scope>FUNCTION</scope>
    <scope>VARIANTS LEU-108 AND ALA-150</scope>
    <scope>CHARACTERIZATION OF VARIANTS LEU-108 AND ALA-150</scope>
</reference>
<comment type="function">
    <text evidence="3">Involved in skeletal muscle excitation/contraction coupling (EC), probably acting as a regulator of the voltage-sensitive calcium channel CACNA1S. EC is a physiological process whereby an electrical signal (depolarization of the plasma membrane) is converted into a chemical signal, a calcium gradient, by the opening of ryanodine receptor calcium release channels. May regulate CACNA1S membrane targeting and activity.</text>
</comment>
<comment type="subunit">
    <text evidence="1">Interacts with CACNA1S, CACNB1 and calsequestrin.</text>
</comment>
<comment type="interaction">
    <interactant intactId="EBI-11305455">
        <id>Q96MG2</id>
    </interactant>
    <interactant intactId="EBI-3913685">
        <id>O95674</id>
        <label>CDS2</label>
    </interactant>
    <organismsDiffer>false</organismsDiffer>
    <experiments>3</experiments>
</comment>
<comment type="interaction">
    <interactant intactId="EBI-11305455">
        <id>Q96MG2</id>
    </interactant>
    <interactant intactId="EBI-2868909">
        <id>Q9H3K2</id>
        <label>GHITM</label>
    </interactant>
    <organismsDiffer>false</organismsDiffer>
    <experiments>3</experiments>
</comment>
<comment type="interaction">
    <interactant intactId="EBI-11305455">
        <id>Q96MG2</id>
    </interactant>
    <interactant intactId="EBI-8070286">
        <id>O43561-2</id>
        <label>LAT</label>
    </interactant>
    <organismsDiffer>false</organismsDiffer>
    <experiments>3</experiments>
</comment>
<comment type="interaction">
    <interactant intactId="EBI-11305455">
        <id>Q96MG2</id>
    </interactant>
    <interactant intactId="EBI-12070086">
        <id>Q5J8X5</id>
        <label>MS4A13</label>
    </interactant>
    <organismsDiffer>false</organismsDiffer>
    <experiments>3</experiments>
</comment>
<comment type="interaction">
    <interactant intactId="EBI-11305455">
        <id>Q96MG2</id>
    </interactant>
    <interactant intactId="EBI-10262251">
        <id>Q8IWU4</id>
        <label>SLC30A8</label>
    </interactant>
    <organismsDiffer>false</organismsDiffer>
    <experiments>3</experiments>
</comment>
<comment type="interaction">
    <interactant intactId="EBI-11305455">
        <id>Q96MG2</id>
    </interactant>
    <interactant intactId="EBI-727240">
        <id>Q9UNK0</id>
        <label>STX8</label>
    </interactant>
    <organismsDiffer>false</organismsDiffer>
    <experiments>5</experiments>
</comment>
<comment type="interaction">
    <interactant intactId="EBI-11305455">
        <id>Q96MG2</id>
    </interactant>
    <interactant intactId="EBI-1045825">
        <id>P55061</id>
        <label>TMBIM6</label>
    </interactant>
    <organismsDiffer>false</organismsDiffer>
    <experiments>3</experiments>
</comment>
<comment type="interaction">
    <interactant intactId="EBI-11305455">
        <id>Q96MG2</id>
    </interactant>
    <interactant intactId="EBI-741480">
        <id>Q9UMX0</id>
        <label>UBQLN1</label>
    </interactant>
    <organismsDiffer>false</organismsDiffer>
    <experiments>3</experiments>
</comment>
<comment type="subcellular location">
    <subcellularLocation>
        <location evidence="1">Sarcoplasmic reticulum membrane</location>
    </subcellularLocation>
    <subcellularLocation>
        <location evidence="1">Endoplasmic reticulum membrane</location>
    </subcellularLocation>
    <text evidence="1">Colocalizes with ryanodine receptors at the sarcoplasmic reticulum triad membranes.</text>
</comment>
<comment type="caution">
    <text evidence="4">It is uncertain whether Met-1 or Met-3 is the initiator.</text>
</comment>
<proteinExistence type="evidence at protein level"/>
<sequence length="331" mass="36319">MSMTTRAWEELDGGLGSCQALEDHSALAETQEDRASATPRLADSGSVPHDSQVAEGPSVDTRPKKMEKEPAARGTPGTGKERLKAGASPRSVPARKKAQTAPPLQPPPPPPALSEELPWGDLSLNKCLVLASLVALLGSAFQLCRDAVPGEAALQARVPEPWVPPSSAPREPSSPLPKFEAQAPPSAPPAPRAEAEVRPKIPGSREAAENDEEEPGEATGEAVREDRVTLADRGPKERPRREGKPRKEKPRKEERPKKERPRKEERPRAAREPREALPQRWESREGGHRPWARDSRDAEPRKKQAWVSPRRPDEEQRPGSRQKLRAGKGRD</sequence>
<feature type="chain" id="PRO_0000314025" description="Junctional sarcoplasmic reticulum protein 1">
    <location>
        <begin position="1"/>
        <end position="331"/>
    </location>
</feature>
<feature type="region of interest" description="Disordered" evidence="2">
    <location>
        <begin position="1"/>
        <end position="118"/>
    </location>
</feature>
<feature type="region of interest" description="Mediates interaction with CACNA1S" evidence="1">
    <location>
        <begin position="3"/>
        <end position="76"/>
    </location>
</feature>
<feature type="region of interest" description="Disordered" evidence="2">
    <location>
        <begin position="157"/>
        <end position="331"/>
    </location>
</feature>
<feature type="compositionally biased region" description="Basic and acidic residues" evidence="2">
    <location>
        <begin position="21"/>
        <end position="35"/>
    </location>
</feature>
<feature type="compositionally biased region" description="Basic and acidic residues" evidence="2">
    <location>
        <begin position="61"/>
        <end position="71"/>
    </location>
</feature>
<feature type="compositionally biased region" description="Pro residues" evidence="2">
    <location>
        <begin position="103"/>
        <end position="112"/>
    </location>
</feature>
<feature type="compositionally biased region" description="Pro residues" evidence="2">
    <location>
        <begin position="161"/>
        <end position="175"/>
    </location>
</feature>
<feature type="compositionally biased region" description="Basic and acidic residues" evidence="2">
    <location>
        <begin position="222"/>
        <end position="242"/>
    </location>
</feature>
<feature type="compositionally biased region" description="Basic and acidic residues" evidence="2">
    <location>
        <begin position="250"/>
        <end position="302"/>
    </location>
</feature>
<feature type="compositionally biased region" description="Basic residues" evidence="2">
    <location>
        <begin position="320"/>
        <end position="331"/>
    </location>
</feature>
<feature type="sequence variant" id="VAR_037838" description="In dbSNP:rs10426549.">
    <original>V</original>
    <variation>A</variation>
    <location>
        <position position="92"/>
    </location>
</feature>
<feature type="sequence variant" id="VAR_069019" description="Affecting excitation/contraction coupling in muscle fibers; the sensitivity of CACNA1S voltage sensor is shifted to higher depolarizing voltages in cells carrying this variant; dbSNP:rs74521370." evidence="3">
    <original>P</original>
    <variation>L</variation>
    <location>
        <position position="108"/>
    </location>
</feature>
<feature type="sequence variant" id="VAR_069020" description="Affecting excitation/contraction coupling in muscle fibers; the sensitivity of CACNA1S voltage sensor is shifted to higher depolarizing voltages in cells carrying this variant; dbSNP:rs80043033." evidence="3">
    <original>G</original>
    <variation>A</variation>
    <location>
        <position position="150"/>
    </location>
</feature>
<feature type="sequence variant" id="VAR_037839" description="In dbSNP:rs35356610.">
    <original>R</original>
    <variation>Q</variation>
    <location>
        <position position="233"/>
    </location>
</feature>
<evidence type="ECO:0000250" key="1"/>
<evidence type="ECO:0000256" key="2">
    <source>
        <dbReference type="SAM" id="MobiDB-lite"/>
    </source>
</evidence>
<evidence type="ECO:0000269" key="3">
    <source>
    </source>
</evidence>
<evidence type="ECO:0000305" key="4"/>